<gene>
    <name type="primary">aldh9A1</name>
    <name type="synonym">aldh9</name>
</gene>
<proteinExistence type="evidence at transcript level"/>
<name>AL9A1_ORYLA</name>
<dbReference type="EC" id="1.2.1.47" evidence="1"/>
<dbReference type="EC" id="1.2.1.3" evidence="1"/>
<dbReference type="EMBL" id="DQ535181">
    <property type="protein sequence ID" value="ABF83193.1"/>
    <property type="molecule type" value="mRNA"/>
</dbReference>
<dbReference type="RefSeq" id="NP_001098318.1">
    <property type="nucleotide sequence ID" value="NM_001104848.1"/>
</dbReference>
<dbReference type="SMR" id="Q19A30"/>
<dbReference type="FunCoup" id="Q19A30">
    <property type="interactions" value="787"/>
</dbReference>
<dbReference type="STRING" id="8090.ENSORLP00000032387"/>
<dbReference type="GeneID" id="100049493"/>
<dbReference type="KEGG" id="ola:100049493"/>
<dbReference type="CTD" id="100005587"/>
<dbReference type="eggNOG" id="KOG2450">
    <property type="taxonomic scope" value="Eukaryota"/>
</dbReference>
<dbReference type="InParanoid" id="Q19A30"/>
<dbReference type="OrthoDB" id="310895at2759"/>
<dbReference type="UniPathway" id="UPA00118"/>
<dbReference type="Proteomes" id="UP000001038">
    <property type="component" value="Unplaced"/>
</dbReference>
<dbReference type="Proteomes" id="UP000265180">
    <property type="component" value="Chromosome 9"/>
</dbReference>
<dbReference type="Proteomes" id="UP000265200">
    <property type="component" value="Chromosome 9"/>
</dbReference>
<dbReference type="GO" id="GO:0005829">
    <property type="term" value="C:cytosol"/>
    <property type="evidence" value="ECO:0007669"/>
    <property type="project" value="UniProtKB-SubCell"/>
</dbReference>
<dbReference type="GO" id="GO:0047105">
    <property type="term" value="F:4-trimethylammoniobutyraldehyde dehydrogenase activity"/>
    <property type="evidence" value="ECO:0000250"/>
    <property type="project" value="UniProtKB"/>
</dbReference>
<dbReference type="GO" id="GO:0019145">
    <property type="term" value="F:aminobutyraldehyde dehydrogenase (NAD+) activity"/>
    <property type="evidence" value="ECO:0000318"/>
    <property type="project" value="GO_Central"/>
</dbReference>
<dbReference type="GO" id="GO:0006081">
    <property type="term" value="P:aldehyde metabolic process"/>
    <property type="evidence" value="ECO:0000250"/>
    <property type="project" value="UniProtKB"/>
</dbReference>
<dbReference type="GO" id="GO:0045329">
    <property type="term" value="P:carnitine biosynthetic process"/>
    <property type="evidence" value="ECO:0007669"/>
    <property type="project" value="UniProtKB-UniPathway"/>
</dbReference>
<dbReference type="GO" id="GO:0051289">
    <property type="term" value="P:protein homotetramerization"/>
    <property type="evidence" value="ECO:0000250"/>
    <property type="project" value="UniProtKB"/>
</dbReference>
<dbReference type="CDD" id="cd07090">
    <property type="entry name" value="ALDH_F9_TMBADH"/>
    <property type="match status" value="1"/>
</dbReference>
<dbReference type="FunFam" id="3.40.309.10:FF:000019">
    <property type="entry name" value="4-trimethylaminobutyraldehyde dehydrogenase isoform X1"/>
    <property type="match status" value="1"/>
</dbReference>
<dbReference type="FunFam" id="3.40.605.10:FF:000016">
    <property type="entry name" value="4-trimethylaminobutyraldehyde dehydrogenase isoform X1"/>
    <property type="match status" value="1"/>
</dbReference>
<dbReference type="Gene3D" id="3.40.605.10">
    <property type="entry name" value="Aldehyde Dehydrogenase, Chain A, domain 1"/>
    <property type="match status" value="1"/>
</dbReference>
<dbReference type="Gene3D" id="3.40.309.10">
    <property type="entry name" value="Aldehyde Dehydrogenase, Chain A, domain 2"/>
    <property type="match status" value="1"/>
</dbReference>
<dbReference type="InterPro" id="IPR016161">
    <property type="entry name" value="Ald_DH/histidinol_DH"/>
</dbReference>
<dbReference type="InterPro" id="IPR016163">
    <property type="entry name" value="Ald_DH_C"/>
</dbReference>
<dbReference type="InterPro" id="IPR016160">
    <property type="entry name" value="Ald_DH_CS_CYS"/>
</dbReference>
<dbReference type="InterPro" id="IPR029510">
    <property type="entry name" value="Ald_DH_CS_GLU"/>
</dbReference>
<dbReference type="InterPro" id="IPR016162">
    <property type="entry name" value="Ald_DH_N"/>
</dbReference>
<dbReference type="InterPro" id="IPR015590">
    <property type="entry name" value="Aldehyde_DH_dom"/>
</dbReference>
<dbReference type="NCBIfam" id="NF009725">
    <property type="entry name" value="PRK13252.1"/>
    <property type="match status" value="1"/>
</dbReference>
<dbReference type="PANTHER" id="PTHR11699">
    <property type="entry name" value="ALDEHYDE DEHYDROGENASE-RELATED"/>
    <property type="match status" value="1"/>
</dbReference>
<dbReference type="Pfam" id="PF00171">
    <property type="entry name" value="Aldedh"/>
    <property type="match status" value="1"/>
</dbReference>
<dbReference type="SUPFAM" id="SSF53720">
    <property type="entry name" value="ALDH-like"/>
    <property type="match status" value="1"/>
</dbReference>
<dbReference type="PROSITE" id="PS00070">
    <property type="entry name" value="ALDEHYDE_DEHYDR_CYS"/>
    <property type="match status" value="1"/>
</dbReference>
<dbReference type="PROSITE" id="PS00687">
    <property type="entry name" value="ALDEHYDE_DEHYDR_GLU"/>
    <property type="match status" value="1"/>
</dbReference>
<protein>
    <recommendedName>
        <fullName>4-trimethylaminobutyraldehyde dehydrogenase</fullName>
        <shortName>TMABA-DH</shortName>
        <shortName>TMABADH</shortName>
        <ecNumber evidence="1">1.2.1.47</ecNumber>
    </recommendedName>
    <alternativeName>
        <fullName>Aldehyde dehydrogenase family 9 member A1</fullName>
        <ecNumber evidence="1">1.2.1.3</ecNumber>
    </alternativeName>
</protein>
<evidence type="ECO:0000250" key="1">
    <source>
        <dbReference type="UniProtKB" id="P49189"/>
    </source>
</evidence>
<evidence type="ECO:0000250" key="2">
    <source>
        <dbReference type="UniProtKB" id="P56533"/>
    </source>
</evidence>
<evidence type="ECO:0000250" key="3">
    <source>
        <dbReference type="UniProtKB" id="Q9JLJ3"/>
    </source>
</evidence>
<evidence type="ECO:0000255" key="4">
    <source>
        <dbReference type="PROSITE-ProRule" id="PRU10007"/>
    </source>
</evidence>
<evidence type="ECO:0000255" key="5">
    <source>
        <dbReference type="PROSITE-ProRule" id="PRU10008"/>
    </source>
</evidence>
<evidence type="ECO:0000269" key="6">
    <source>
    </source>
</evidence>
<evidence type="ECO:0000305" key="7"/>
<accession>Q19A30</accession>
<keyword id="KW-0963">Cytoplasm</keyword>
<keyword id="KW-0520">NAD</keyword>
<keyword id="KW-0560">Oxidoreductase</keyword>
<keyword id="KW-1185">Reference proteome</keyword>
<sequence>MSLATLDSMGGASTGSVTVTEQLNFWAGRRVGGRNSEHAEPVFEPATGRVLCQMVPCGAEEVDEAIMSAHAAYVQWSKKSGTERARVMLEAARIIRERREKIAKLEVINNGKSITEALVDIDVAWQCIEYYAGVAGTLAGQHFQLPGGAFAYTRREPLGVCVGIGAWNYPFQIAACKSAPALACGNAMVFKPSPFTPVTAVILAEIYKEAGVPDGLFCVVQGGAETGSLLCNHPKVAKVSFTGSVPTGKKVMEMSAKGVKQVTLELGGKSPLIIFKDCDLENAVKGALMANFLTQGQVCCNGTRVFVHKDILPQFLEEVVKRTKAIAVGDPLLDSTRMGALITKPHLEKVLGFVRQAKKEGGRVLCGGEPFVPSDPKLKGGYFMSPCILDNCRDDMTCVKEEIFGPVMSVLPFDTEEEVIRRANNTTFGLASGVFTRDISRAHRVAASLEAGTCFINNYNISPVEVPFGGYKMSGFGRENGQVTIEYYSQLKTVVVETGDVENYF</sequence>
<reference key="1">
    <citation type="journal article" date="2007" name="Comp. Biochem. Physiol.">
        <title>Ethanol attenuates Aldh9 mRNA expression in Japanese medaka (Oryzias latipes) embryogenesis.</title>
        <authorList>
            <person name="Wang X."/>
            <person name="Zhu S."/>
            <person name="Khan I.A."/>
            <person name="Dasmahapatra A.K."/>
        </authorList>
    </citation>
    <scope>NUCLEOTIDE SEQUENCE [MRNA]</scope>
    <scope>TISSUE SPECIFICITY</scope>
</reference>
<organism>
    <name type="scientific">Oryzias latipes</name>
    <name type="common">Japanese rice fish</name>
    <name type="synonym">Japanese killifish</name>
    <dbReference type="NCBI Taxonomy" id="8090"/>
    <lineage>
        <taxon>Eukaryota</taxon>
        <taxon>Metazoa</taxon>
        <taxon>Chordata</taxon>
        <taxon>Craniata</taxon>
        <taxon>Vertebrata</taxon>
        <taxon>Euteleostomi</taxon>
        <taxon>Actinopterygii</taxon>
        <taxon>Neopterygii</taxon>
        <taxon>Teleostei</taxon>
        <taxon>Neoteleostei</taxon>
        <taxon>Acanthomorphata</taxon>
        <taxon>Ovalentaria</taxon>
        <taxon>Atherinomorphae</taxon>
        <taxon>Beloniformes</taxon>
        <taxon>Adrianichthyidae</taxon>
        <taxon>Oryziinae</taxon>
        <taxon>Oryzias</taxon>
    </lineage>
</organism>
<feature type="chain" id="PRO_0000300626" description="4-trimethylaminobutyraldehyde dehydrogenase">
    <location>
        <begin position="1"/>
        <end position="505"/>
    </location>
</feature>
<feature type="active site" description="Proton acceptor" evidence="4">
    <location>
        <position position="265"/>
    </location>
</feature>
<feature type="active site" description="Nucleophile" evidence="5">
    <location>
        <position position="299"/>
    </location>
</feature>
<feature type="binding site" evidence="2">
    <location>
        <position position="191"/>
    </location>
    <ligand>
        <name>NAD(+)</name>
        <dbReference type="ChEBI" id="CHEBI:57540"/>
    </ligand>
</feature>
<feature type="binding site" evidence="2">
    <location>
        <begin position="243"/>
        <end position="247"/>
    </location>
    <ligand>
        <name>NAD(+)</name>
        <dbReference type="ChEBI" id="CHEBI:57540"/>
    </ligand>
</feature>
<feature type="binding site" evidence="2">
    <location>
        <position position="402"/>
    </location>
    <ligand>
        <name>NAD(+)</name>
        <dbReference type="ChEBI" id="CHEBI:57540"/>
    </ligand>
</feature>
<comment type="function">
    <text evidence="1">Converts gamma-trimethylaminobutyraldehyde into gamma-butyrobetaine with high efficiency (in vitro). Can catalyze the irreversible oxidation of a broad range of aldehydes to the corresponding acids in an NAD-dependent reaction, but with low efficiency.</text>
</comment>
<comment type="catalytic activity">
    <reaction evidence="1">
        <text>4-(trimethylamino)butanal + NAD(+) + H2O = 4-(trimethylamino)butanoate + NADH + 2 H(+)</text>
        <dbReference type="Rhea" id="RHEA:17985"/>
        <dbReference type="ChEBI" id="CHEBI:15377"/>
        <dbReference type="ChEBI" id="CHEBI:15378"/>
        <dbReference type="ChEBI" id="CHEBI:16244"/>
        <dbReference type="ChEBI" id="CHEBI:18020"/>
        <dbReference type="ChEBI" id="CHEBI:57540"/>
        <dbReference type="ChEBI" id="CHEBI:57945"/>
        <dbReference type="EC" id="1.2.1.47"/>
    </reaction>
</comment>
<comment type="catalytic activity">
    <reaction evidence="1">
        <text>an aldehyde + NAD(+) + H2O = a carboxylate + NADH + 2 H(+)</text>
        <dbReference type="Rhea" id="RHEA:16185"/>
        <dbReference type="ChEBI" id="CHEBI:15377"/>
        <dbReference type="ChEBI" id="CHEBI:15378"/>
        <dbReference type="ChEBI" id="CHEBI:17478"/>
        <dbReference type="ChEBI" id="CHEBI:29067"/>
        <dbReference type="ChEBI" id="CHEBI:57540"/>
        <dbReference type="ChEBI" id="CHEBI:57945"/>
        <dbReference type="EC" id="1.2.1.3"/>
    </reaction>
</comment>
<comment type="pathway">
    <text evidence="1">Amine and polyamine biosynthesis; carnitine biosynthesis.</text>
</comment>
<comment type="subunit">
    <text evidence="1">Homotetramer.</text>
</comment>
<comment type="subcellular location">
    <subcellularLocation>
        <location evidence="3">Cytoplasm</location>
        <location evidence="3">Cytosol</location>
    </subcellularLocation>
</comment>
<comment type="tissue specificity">
    <text evidence="6">Constitutively expressed in all organs tested: brain, eye, gill, GI, heart, liver, kidney, muscle, skin, testis and ovary.</text>
</comment>
<comment type="similarity">
    <text evidence="7">Belongs to the aldehyde dehydrogenase family.</text>
</comment>